<name>RL21_ECO45</name>
<comment type="function">
    <text evidence="1">This protein binds to 23S rRNA in the presence of protein L20.</text>
</comment>
<comment type="subunit">
    <text evidence="1">Part of the 50S ribosomal subunit. Contacts protein L20.</text>
</comment>
<comment type="similarity">
    <text evidence="1">Belongs to the bacterial ribosomal protein bL21 family.</text>
</comment>
<sequence length="103" mass="11564">MYAVFQSGGKQHRVSEGQTVRLEKLDIATGETVEFAEVLMIANGEEVKIGVPFVDGGVIKAEVVAHGRGEKVKIVKFRRRKHYRKQQGHRQWFTDVKITGISA</sequence>
<feature type="chain" id="PRO_1000143788" description="Large ribosomal subunit protein bL21">
    <location>
        <begin position="1"/>
        <end position="103"/>
    </location>
</feature>
<organism>
    <name type="scientific">Escherichia coli O45:K1 (strain S88 / ExPEC)</name>
    <dbReference type="NCBI Taxonomy" id="585035"/>
    <lineage>
        <taxon>Bacteria</taxon>
        <taxon>Pseudomonadati</taxon>
        <taxon>Pseudomonadota</taxon>
        <taxon>Gammaproteobacteria</taxon>
        <taxon>Enterobacterales</taxon>
        <taxon>Enterobacteriaceae</taxon>
        <taxon>Escherichia</taxon>
    </lineage>
</organism>
<proteinExistence type="inferred from homology"/>
<evidence type="ECO:0000255" key="1">
    <source>
        <dbReference type="HAMAP-Rule" id="MF_01363"/>
    </source>
</evidence>
<evidence type="ECO:0000305" key="2"/>
<reference key="1">
    <citation type="journal article" date="2009" name="PLoS Genet.">
        <title>Organised genome dynamics in the Escherichia coli species results in highly diverse adaptive paths.</title>
        <authorList>
            <person name="Touchon M."/>
            <person name="Hoede C."/>
            <person name="Tenaillon O."/>
            <person name="Barbe V."/>
            <person name="Baeriswyl S."/>
            <person name="Bidet P."/>
            <person name="Bingen E."/>
            <person name="Bonacorsi S."/>
            <person name="Bouchier C."/>
            <person name="Bouvet O."/>
            <person name="Calteau A."/>
            <person name="Chiapello H."/>
            <person name="Clermont O."/>
            <person name="Cruveiller S."/>
            <person name="Danchin A."/>
            <person name="Diard M."/>
            <person name="Dossat C."/>
            <person name="Karoui M.E."/>
            <person name="Frapy E."/>
            <person name="Garry L."/>
            <person name="Ghigo J.M."/>
            <person name="Gilles A.M."/>
            <person name="Johnson J."/>
            <person name="Le Bouguenec C."/>
            <person name="Lescat M."/>
            <person name="Mangenot S."/>
            <person name="Martinez-Jehanne V."/>
            <person name="Matic I."/>
            <person name="Nassif X."/>
            <person name="Oztas S."/>
            <person name="Petit M.A."/>
            <person name="Pichon C."/>
            <person name="Rouy Z."/>
            <person name="Ruf C.S."/>
            <person name="Schneider D."/>
            <person name="Tourret J."/>
            <person name="Vacherie B."/>
            <person name="Vallenet D."/>
            <person name="Medigue C."/>
            <person name="Rocha E.P.C."/>
            <person name="Denamur E."/>
        </authorList>
    </citation>
    <scope>NUCLEOTIDE SEQUENCE [LARGE SCALE GENOMIC DNA]</scope>
    <source>
        <strain>S88 / ExPEC</strain>
    </source>
</reference>
<gene>
    <name evidence="1" type="primary">rplU</name>
    <name type="ordered locus">ECS88_3568</name>
</gene>
<keyword id="KW-1185">Reference proteome</keyword>
<keyword id="KW-0687">Ribonucleoprotein</keyword>
<keyword id="KW-0689">Ribosomal protein</keyword>
<keyword id="KW-0694">RNA-binding</keyword>
<keyword id="KW-0699">rRNA-binding</keyword>
<accession>B7MBV5</accession>
<protein>
    <recommendedName>
        <fullName evidence="1">Large ribosomal subunit protein bL21</fullName>
    </recommendedName>
    <alternativeName>
        <fullName evidence="2">50S ribosomal protein L21</fullName>
    </alternativeName>
</protein>
<dbReference type="EMBL" id="CU928161">
    <property type="protein sequence ID" value="CAR04796.1"/>
    <property type="molecule type" value="Genomic_DNA"/>
</dbReference>
<dbReference type="RefSeq" id="WP_000271401.1">
    <property type="nucleotide sequence ID" value="NC_011742.1"/>
</dbReference>
<dbReference type="EMDB" id="EMD-7970"/>
<dbReference type="EMDB" id="EMD-8826"/>
<dbReference type="EMDB" id="EMD-8829"/>
<dbReference type="SMR" id="B7MBV5"/>
<dbReference type="IntAct" id="B7MBV5">
    <property type="interactions" value="1"/>
</dbReference>
<dbReference type="GeneID" id="93778795"/>
<dbReference type="KEGG" id="ecz:ECS88_3568"/>
<dbReference type="HOGENOM" id="CLU_061463_3_3_6"/>
<dbReference type="Proteomes" id="UP000000747">
    <property type="component" value="Chromosome"/>
</dbReference>
<dbReference type="GO" id="GO:0005737">
    <property type="term" value="C:cytoplasm"/>
    <property type="evidence" value="ECO:0007669"/>
    <property type="project" value="UniProtKB-ARBA"/>
</dbReference>
<dbReference type="GO" id="GO:1990904">
    <property type="term" value="C:ribonucleoprotein complex"/>
    <property type="evidence" value="ECO:0007669"/>
    <property type="project" value="UniProtKB-KW"/>
</dbReference>
<dbReference type="GO" id="GO:0005840">
    <property type="term" value="C:ribosome"/>
    <property type="evidence" value="ECO:0007669"/>
    <property type="project" value="UniProtKB-KW"/>
</dbReference>
<dbReference type="GO" id="GO:0019843">
    <property type="term" value="F:rRNA binding"/>
    <property type="evidence" value="ECO:0007669"/>
    <property type="project" value="UniProtKB-UniRule"/>
</dbReference>
<dbReference type="GO" id="GO:0003735">
    <property type="term" value="F:structural constituent of ribosome"/>
    <property type="evidence" value="ECO:0007669"/>
    <property type="project" value="InterPro"/>
</dbReference>
<dbReference type="GO" id="GO:0006412">
    <property type="term" value="P:translation"/>
    <property type="evidence" value="ECO:0007669"/>
    <property type="project" value="UniProtKB-UniRule"/>
</dbReference>
<dbReference type="HAMAP" id="MF_01363">
    <property type="entry name" value="Ribosomal_bL21"/>
    <property type="match status" value="1"/>
</dbReference>
<dbReference type="InterPro" id="IPR028909">
    <property type="entry name" value="bL21-like"/>
</dbReference>
<dbReference type="InterPro" id="IPR036164">
    <property type="entry name" value="bL21-like_sf"/>
</dbReference>
<dbReference type="InterPro" id="IPR001787">
    <property type="entry name" value="Ribosomal_bL21"/>
</dbReference>
<dbReference type="InterPro" id="IPR018258">
    <property type="entry name" value="Ribosomal_bL21_CS"/>
</dbReference>
<dbReference type="NCBIfam" id="TIGR00061">
    <property type="entry name" value="L21"/>
    <property type="match status" value="1"/>
</dbReference>
<dbReference type="PANTHER" id="PTHR21349">
    <property type="entry name" value="50S RIBOSOMAL PROTEIN L21"/>
    <property type="match status" value="1"/>
</dbReference>
<dbReference type="PANTHER" id="PTHR21349:SF0">
    <property type="entry name" value="LARGE RIBOSOMAL SUBUNIT PROTEIN BL21M"/>
    <property type="match status" value="1"/>
</dbReference>
<dbReference type="Pfam" id="PF00829">
    <property type="entry name" value="Ribosomal_L21p"/>
    <property type="match status" value="1"/>
</dbReference>
<dbReference type="SUPFAM" id="SSF141091">
    <property type="entry name" value="L21p-like"/>
    <property type="match status" value="1"/>
</dbReference>
<dbReference type="PROSITE" id="PS01169">
    <property type="entry name" value="RIBOSOMAL_L21"/>
    <property type="match status" value="1"/>
</dbReference>